<keyword id="KW-0067">ATP-binding</keyword>
<keyword id="KW-0378">Hydrolase</keyword>
<keyword id="KW-0547">Nucleotide-binding</keyword>
<protein>
    <recommendedName>
        <fullName evidence="1">5-oxoprolinase subunit A</fullName>
        <shortName evidence="1">5-OPase subunit A</shortName>
        <ecNumber evidence="1">3.5.2.9</ecNumber>
    </recommendedName>
    <alternativeName>
        <fullName evidence="1">5-oxoprolinase (ATP-hydrolyzing) subunit A</fullName>
    </alternativeName>
</protein>
<comment type="function">
    <text evidence="1">Catalyzes the cleavage of 5-oxoproline to form L-glutamate coupled to the hydrolysis of ATP to ADP and inorganic phosphate.</text>
</comment>
<comment type="catalytic activity">
    <reaction evidence="1">
        <text>5-oxo-L-proline + ATP + 2 H2O = L-glutamate + ADP + phosphate + H(+)</text>
        <dbReference type="Rhea" id="RHEA:10348"/>
        <dbReference type="ChEBI" id="CHEBI:15377"/>
        <dbReference type="ChEBI" id="CHEBI:15378"/>
        <dbReference type="ChEBI" id="CHEBI:29985"/>
        <dbReference type="ChEBI" id="CHEBI:30616"/>
        <dbReference type="ChEBI" id="CHEBI:43474"/>
        <dbReference type="ChEBI" id="CHEBI:58402"/>
        <dbReference type="ChEBI" id="CHEBI:456216"/>
        <dbReference type="EC" id="3.5.2.9"/>
    </reaction>
</comment>
<comment type="subunit">
    <text evidence="1">Forms a complex composed of PxpA, PxpB and PxpC.</text>
</comment>
<comment type="similarity">
    <text evidence="1">Belongs to the LamB/PxpA family.</text>
</comment>
<organism>
    <name type="scientific">Yersinia pestis bv. Antiqua (strain Antiqua)</name>
    <dbReference type="NCBI Taxonomy" id="360102"/>
    <lineage>
        <taxon>Bacteria</taxon>
        <taxon>Pseudomonadati</taxon>
        <taxon>Pseudomonadota</taxon>
        <taxon>Gammaproteobacteria</taxon>
        <taxon>Enterobacterales</taxon>
        <taxon>Yersiniaceae</taxon>
        <taxon>Yersinia</taxon>
    </lineage>
</organism>
<proteinExistence type="inferred from homology"/>
<name>PXPA_YERPA</name>
<gene>
    <name evidence="1" type="primary">pxpA</name>
    <name type="ordered locus">YPA_2432</name>
</gene>
<dbReference type="EC" id="3.5.2.9" evidence="1"/>
<dbReference type="EMBL" id="CP000308">
    <property type="protein sequence ID" value="ABG14397.1"/>
    <property type="molecule type" value="Genomic_DNA"/>
</dbReference>
<dbReference type="RefSeq" id="WP_002209659.1">
    <property type="nucleotide sequence ID" value="NZ_CP009906.1"/>
</dbReference>
<dbReference type="SMR" id="Q1C575"/>
<dbReference type="GeneID" id="57975991"/>
<dbReference type="KEGG" id="ypa:YPA_2432"/>
<dbReference type="Proteomes" id="UP000001971">
    <property type="component" value="Chromosome"/>
</dbReference>
<dbReference type="GO" id="GO:0017168">
    <property type="term" value="F:5-oxoprolinase (ATP-hydrolyzing) activity"/>
    <property type="evidence" value="ECO:0007669"/>
    <property type="project" value="UniProtKB-UniRule"/>
</dbReference>
<dbReference type="GO" id="GO:0005524">
    <property type="term" value="F:ATP binding"/>
    <property type="evidence" value="ECO:0007669"/>
    <property type="project" value="UniProtKB-UniRule"/>
</dbReference>
<dbReference type="GO" id="GO:0005975">
    <property type="term" value="P:carbohydrate metabolic process"/>
    <property type="evidence" value="ECO:0007669"/>
    <property type="project" value="InterPro"/>
</dbReference>
<dbReference type="CDD" id="cd10800">
    <property type="entry name" value="LamB_YcsF_YbgL_like"/>
    <property type="match status" value="1"/>
</dbReference>
<dbReference type="Gene3D" id="3.20.20.370">
    <property type="entry name" value="Glycoside hydrolase/deacetylase"/>
    <property type="match status" value="1"/>
</dbReference>
<dbReference type="HAMAP" id="MF_00691">
    <property type="entry name" value="PxpA"/>
    <property type="match status" value="1"/>
</dbReference>
<dbReference type="InterPro" id="IPR011330">
    <property type="entry name" value="Glyco_hydro/deAcase_b/a-brl"/>
</dbReference>
<dbReference type="InterPro" id="IPR005501">
    <property type="entry name" value="LamB/YcsF/PxpA-like"/>
</dbReference>
<dbReference type="NCBIfam" id="NF003812">
    <property type="entry name" value="PRK05406.1-1"/>
    <property type="match status" value="1"/>
</dbReference>
<dbReference type="NCBIfam" id="NF003814">
    <property type="entry name" value="PRK05406.1-3"/>
    <property type="match status" value="1"/>
</dbReference>
<dbReference type="NCBIfam" id="NF003815">
    <property type="entry name" value="PRK05406.1-4"/>
    <property type="match status" value="1"/>
</dbReference>
<dbReference type="NCBIfam" id="NF003816">
    <property type="entry name" value="PRK05406.1-5"/>
    <property type="match status" value="1"/>
</dbReference>
<dbReference type="PANTHER" id="PTHR30292:SF0">
    <property type="entry name" value="5-OXOPROLINASE SUBUNIT A"/>
    <property type="match status" value="1"/>
</dbReference>
<dbReference type="PANTHER" id="PTHR30292">
    <property type="entry name" value="UNCHARACTERIZED PROTEIN YBGL-RELATED"/>
    <property type="match status" value="1"/>
</dbReference>
<dbReference type="Pfam" id="PF03746">
    <property type="entry name" value="LamB_YcsF"/>
    <property type="match status" value="1"/>
</dbReference>
<dbReference type="SUPFAM" id="SSF88713">
    <property type="entry name" value="Glycoside hydrolase/deacetylase"/>
    <property type="match status" value="1"/>
</dbReference>
<evidence type="ECO:0000255" key="1">
    <source>
        <dbReference type="HAMAP-Rule" id="MF_00691"/>
    </source>
</evidence>
<feature type="chain" id="PRO_1000045232" description="5-oxoprolinase subunit A">
    <location>
        <begin position="1"/>
        <end position="245"/>
    </location>
</feature>
<reference key="1">
    <citation type="journal article" date="2006" name="J. Bacteriol.">
        <title>Complete genome sequence of Yersinia pestis strains Antiqua and Nepal516: evidence of gene reduction in an emerging pathogen.</title>
        <authorList>
            <person name="Chain P.S.G."/>
            <person name="Hu P."/>
            <person name="Malfatti S.A."/>
            <person name="Radnedge L."/>
            <person name="Larimer F."/>
            <person name="Vergez L.M."/>
            <person name="Worsham P."/>
            <person name="Chu M.C."/>
            <person name="Andersen G.L."/>
        </authorList>
    </citation>
    <scope>NUCLEOTIDE SEQUENCE [LARGE SCALE GENOMIC DNA]</scope>
    <source>
        <strain>Antiqua</strain>
    </source>
</reference>
<sequence>MKIDLNADLGEGCANDQALLQLVSSANIACGFHAGDAQTMRQSVRWALEYGVAIGAHPSFPDRENFGRTAMQLPPETVYAQVVYQLGALAAIVQVEGGVMQHVKPHGMLYNQAAVDPLLADAIAQAVKAVDPSLRLVGLAGSELIRAGTRVGLVTRQEVFADRHYQPDGTLVPRSQPDALIESDELALSQTLAMVQQHQVQACDGSWVQVQADTVCVHGDGVQALAFARCLRDRFQQEGISVIAQ</sequence>
<accession>Q1C575</accession>